<accession>A7FMF0</accession>
<organism>
    <name type="scientific">Yersinia pseudotuberculosis serotype O:1b (strain IP 31758)</name>
    <dbReference type="NCBI Taxonomy" id="349747"/>
    <lineage>
        <taxon>Bacteria</taxon>
        <taxon>Pseudomonadati</taxon>
        <taxon>Pseudomonadota</taxon>
        <taxon>Gammaproteobacteria</taxon>
        <taxon>Enterobacterales</taxon>
        <taxon>Yersiniaceae</taxon>
        <taxon>Yersinia</taxon>
    </lineage>
</organism>
<name>Y3473_YERP3</name>
<protein>
    <recommendedName>
        <fullName evidence="1">UPF0246 protein YpsIP31758_3473</fullName>
    </recommendedName>
</protein>
<proteinExistence type="inferred from homology"/>
<gene>
    <name type="ordered locus">YpsIP31758_3473</name>
</gene>
<sequence length="258" mass="29073">MLIIISPAKTLDYQSPLATTKFSQPEMLDKSQALIEICRELTPAQISSLMGISDKLAGLNAARFSEWQPDFTPANARQAILAFKGDVYTGMQAESFSEADFDFAQQHLRMLSGLYGLLRPLDLMQPYRLEMGTKLANPRGKDLYAFWGDQITEKLNQALELQGDNILINLASDEYFKAVKPAKLSGSLIKPVFLDEKNGKYKIISFYAKKARGLMSRFIIQNKLTKPEQLVDFNLEGYEFDAGLSAKNELVFKRAEQH</sequence>
<comment type="similarity">
    <text evidence="1">Belongs to the UPF0246 family.</text>
</comment>
<feature type="chain" id="PRO_1000061646" description="UPF0246 protein YpsIP31758_3473">
    <location>
        <begin position="1"/>
        <end position="258"/>
    </location>
</feature>
<dbReference type="EMBL" id="CP000720">
    <property type="protein sequence ID" value="ABS47110.1"/>
    <property type="molecule type" value="Genomic_DNA"/>
</dbReference>
<dbReference type="SMR" id="A7FMF0"/>
<dbReference type="KEGG" id="ypi:YpsIP31758_3473"/>
<dbReference type="HOGENOM" id="CLU_061989_0_0_6"/>
<dbReference type="Proteomes" id="UP000002412">
    <property type="component" value="Chromosome"/>
</dbReference>
<dbReference type="GO" id="GO:0005829">
    <property type="term" value="C:cytosol"/>
    <property type="evidence" value="ECO:0007669"/>
    <property type="project" value="TreeGrafter"/>
</dbReference>
<dbReference type="GO" id="GO:0033194">
    <property type="term" value="P:response to hydroperoxide"/>
    <property type="evidence" value="ECO:0007669"/>
    <property type="project" value="TreeGrafter"/>
</dbReference>
<dbReference type="HAMAP" id="MF_00652">
    <property type="entry name" value="UPF0246"/>
    <property type="match status" value="1"/>
</dbReference>
<dbReference type="InterPro" id="IPR005583">
    <property type="entry name" value="YaaA"/>
</dbReference>
<dbReference type="NCBIfam" id="NF002541">
    <property type="entry name" value="PRK02101.1-1"/>
    <property type="match status" value="1"/>
</dbReference>
<dbReference type="NCBIfam" id="NF002542">
    <property type="entry name" value="PRK02101.1-3"/>
    <property type="match status" value="1"/>
</dbReference>
<dbReference type="PANTHER" id="PTHR30283:SF4">
    <property type="entry name" value="PEROXIDE STRESS RESISTANCE PROTEIN YAAA"/>
    <property type="match status" value="1"/>
</dbReference>
<dbReference type="PANTHER" id="PTHR30283">
    <property type="entry name" value="PEROXIDE STRESS RESPONSE PROTEIN YAAA"/>
    <property type="match status" value="1"/>
</dbReference>
<dbReference type="Pfam" id="PF03883">
    <property type="entry name" value="H2O2_YaaD"/>
    <property type="match status" value="1"/>
</dbReference>
<reference key="1">
    <citation type="journal article" date="2007" name="PLoS Genet.">
        <title>The complete genome sequence of Yersinia pseudotuberculosis IP31758, the causative agent of Far East scarlet-like fever.</title>
        <authorList>
            <person name="Eppinger M."/>
            <person name="Rosovitz M.J."/>
            <person name="Fricke W.F."/>
            <person name="Rasko D.A."/>
            <person name="Kokorina G."/>
            <person name="Fayolle C."/>
            <person name="Lindler L.E."/>
            <person name="Carniel E."/>
            <person name="Ravel J."/>
        </authorList>
    </citation>
    <scope>NUCLEOTIDE SEQUENCE [LARGE SCALE GENOMIC DNA]</scope>
    <source>
        <strain>IP 31758</strain>
    </source>
</reference>
<evidence type="ECO:0000255" key="1">
    <source>
        <dbReference type="HAMAP-Rule" id="MF_00652"/>
    </source>
</evidence>